<accession>O06417</accession>
<accession>F2GNG5</accession>
<accession>I6XVK5</accession>
<accession>Q7D9N4</accession>
<organism>
    <name type="scientific">Mycobacterium tuberculosis (strain ATCC 25618 / H37Rv)</name>
    <dbReference type="NCBI Taxonomy" id="83332"/>
    <lineage>
        <taxon>Bacteria</taxon>
        <taxon>Bacillati</taxon>
        <taxon>Actinomycetota</taxon>
        <taxon>Actinomycetes</taxon>
        <taxon>Mycobacteriales</taxon>
        <taxon>Mycobacteriaceae</taxon>
        <taxon>Mycobacterium</taxon>
        <taxon>Mycobacterium tuberculosis complex</taxon>
    </lineage>
</organism>
<dbReference type="EC" id="6.2.1.2" evidence="2"/>
<dbReference type="EC" id="6.2.1.3" evidence="2"/>
<dbReference type="EMBL" id="AL123456">
    <property type="protein sequence ID" value="CCP43289.1"/>
    <property type="molecule type" value="Genomic_DNA"/>
</dbReference>
<dbReference type="RefSeq" id="NP_215065.1">
    <property type="nucleotide sequence ID" value="NC_000962.3"/>
</dbReference>
<dbReference type="RefSeq" id="WP_003402917.1">
    <property type="nucleotide sequence ID" value="NZ_NVQJ01000036.1"/>
</dbReference>
<dbReference type="PDB" id="8IVI">
    <property type="method" value="X-ray"/>
    <property type="resolution" value="2.29 A"/>
    <property type="chains" value="A/B=1-571"/>
</dbReference>
<dbReference type="PDBsum" id="8IVI"/>
<dbReference type="SMR" id="O06417"/>
<dbReference type="STRING" id="83332.Rv0551c"/>
<dbReference type="SwissLipids" id="SLP:000000978"/>
<dbReference type="PaxDb" id="83332-Rv0551c"/>
<dbReference type="DNASU" id="887526"/>
<dbReference type="GeneID" id="887526"/>
<dbReference type="KEGG" id="mtu:Rv0551c"/>
<dbReference type="KEGG" id="mtv:RVBD_0551c"/>
<dbReference type="PATRIC" id="fig|83332.111.peg.608"/>
<dbReference type="TubercuList" id="Rv0551c"/>
<dbReference type="eggNOG" id="COG0318">
    <property type="taxonomic scope" value="Bacteria"/>
</dbReference>
<dbReference type="InParanoid" id="O06417"/>
<dbReference type="OrthoDB" id="9803968at2"/>
<dbReference type="PhylomeDB" id="O06417"/>
<dbReference type="UniPathway" id="UPA00199"/>
<dbReference type="Proteomes" id="UP000001584">
    <property type="component" value="Chromosome"/>
</dbReference>
<dbReference type="GO" id="GO:0005886">
    <property type="term" value="C:plasma membrane"/>
    <property type="evidence" value="ECO:0007005"/>
    <property type="project" value="MTBBASE"/>
</dbReference>
<dbReference type="GO" id="GO:0005524">
    <property type="term" value="F:ATP binding"/>
    <property type="evidence" value="ECO:0007669"/>
    <property type="project" value="UniProtKB-KW"/>
</dbReference>
<dbReference type="GO" id="GO:0004467">
    <property type="term" value="F:long-chain fatty acid-CoA ligase activity"/>
    <property type="evidence" value="ECO:0007669"/>
    <property type="project" value="UniProtKB-EC"/>
</dbReference>
<dbReference type="GO" id="GO:0031956">
    <property type="term" value="F:medium-chain fatty acid-CoA ligase activity"/>
    <property type="evidence" value="ECO:0007669"/>
    <property type="project" value="UniProtKB-EC"/>
</dbReference>
<dbReference type="FunFam" id="3.40.50.12780:FF:000040">
    <property type="entry name" value="Acyl-CoA synthetase"/>
    <property type="match status" value="1"/>
</dbReference>
<dbReference type="FunFam" id="3.30.300.30:FF:000041">
    <property type="entry name" value="Fatty-acid-CoA ligase FadD8"/>
    <property type="match status" value="1"/>
</dbReference>
<dbReference type="Gene3D" id="3.30.300.30">
    <property type="match status" value="1"/>
</dbReference>
<dbReference type="Gene3D" id="3.40.50.12780">
    <property type="entry name" value="N-terminal domain of ligase-like"/>
    <property type="match status" value="1"/>
</dbReference>
<dbReference type="InterPro" id="IPR025110">
    <property type="entry name" value="AMP-bd_C"/>
</dbReference>
<dbReference type="InterPro" id="IPR045851">
    <property type="entry name" value="AMP-bd_C_sf"/>
</dbReference>
<dbReference type="InterPro" id="IPR020845">
    <property type="entry name" value="AMP-binding_CS"/>
</dbReference>
<dbReference type="InterPro" id="IPR000873">
    <property type="entry name" value="AMP-dep_synth/lig_dom"/>
</dbReference>
<dbReference type="InterPro" id="IPR042099">
    <property type="entry name" value="ANL_N_sf"/>
</dbReference>
<dbReference type="InterPro" id="IPR050237">
    <property type="entry name" value="ATP-dep_AMP-bd_enzyme"/>
</dbReference>
<dbReference type="NCBIfam" id="NF004838">
    <property type="entry name" value="PRK06188.1"/>
    <property type="match status" value="1"/>
</dbReference>
<dbReference type="PANTHER" id="PTHR43767">
    <property type="entry name" value="LONG-CHAIN-FATTY-ACID--COA LIGASE"/>
    <property type="match status" value="1"/>
</dbReference>
<dbReference type="PANTHER" id="PTHR43767:SF7">
    <property type="entry name" value="MEDIUM_LONG-CHAIN-FATTY-ACID--COA LIGASE FADD8"/>
    <property type="match status" value="1"/>
</dbReference>
<dbReference type="Pfam" id="PF00501">
    <property type="entry name" value="AMP-binding"/>
    <property type="match status" value="1"/>
</dbReference>
<dbReference type="Pfam" id="PF13193">
    <property type="entry name" value="AMP-binding_C"/>
    <property type="match status" value="1"/>
</dbReference>
<dbReference type="SUPFAM" id="SSF56801">
    <property type="entry name" value="Acetyl-CoA synthetase-like"/>
    <property type="match status" value="1"/>
</dbReference>
<dbReference type="PROSITE" id="PS00455">
    <property type="entry name" value="AMP_BINDING"/>
    <property type="match status" value="1"/>
</dbReference>
<reference key="1">
    <citation type="journal article" date="1998" name="Nature">
        <title>Deciphering the biology of Mycobacterium tuberculosis from the complete genome sequence.</title>
        <authorList>
            <person name="Cole S.T."/>
            <person name="Brosch R."/>
            <person name="Parkhill J."/>
            <person name="Garnier T."/>
            <person name="Churcher C.M."/>
            <person name="Harris D.E."/>
            <person name="Gordon S.V."/>
            <person name="Eiglmeier K."/>
            <person name="Gas S."/>
            <person name="Barry C.E. III"/>
            <person name="Tekaia F."/>
            <person name="Badcock K."/>
            <person name="Basham D."/>
            <person name="Brown D."/>
            <person name="Chillingworth T."/>
            <person name="Connor R."/>
            <person name="Davies R.M."/>
            <person name="Devlin K."/>
            <person name="Feltwell T."/>
            <person name="Gentles S."/>
            <person name="Hamlin N."/>
            <person name="Holroyd S."/>
            <person name="Hornsby T."/>
            <person name="Jagels K."/>
            <person name="Krogh A."/>
            <person name="McLean J."/>
            <person name="Moule S."/>
            <person name="Murphy L.D."/>
            <person name="Oliver S."/>
            <person name="Osborne J."/>
            <person name="Quail M.A."/>
            <person name="Rajandream M.A."/>
            <person name="Rogers J."/>
            <person name="Rutter S."/>
            <person name="Seeger K."/>
            <person name="Skelton S."/>
            <person name="Squares S."/>
            <person name="Squares R."/>
            <person name="Sulston J.E."/>
            <person name="Taylor K."/>
            <person name="Whitehead S."/>
            <person name="Barrell B.G."/>
        </authorList>
    </citation>
    <scope>NUCLEOTIDE SEQUENCE [LARGE SCALE GENOMIC DNA]</scope>
    <source>
        <strain>ATCC 25618 / H37Rv</strain>
    </source>
</reference>
<reference key="2">
    <citation type="journal article" date="2009" name="Nat. Chem. Biol.">
        <title>Mechanistic and functional insights into fatty acid activation in Mycobacterium tuberculosis.</title>
        <authorList>
            <person name="Arora P."/>
            <person name="Goyal A."/>
            <person name="Natarajan V.T."/>
            <person name="Rajakumara E."/>
            <person name="Verma P."/>
            <person name="Gupta R."/>
            <person name="Yousuf M."/>
            <person name="Trivedi O.A."/>
            <person name="Mohanty D."/>
            <person name="Tyagi A."/>
            <person name="Sankaranarayanan R."/>
            <person name="Gokhale R.S."/>
        </authorList>
    </citation>
    <scope>FUNCTION</scope>
    <scope>CATALYTIC ACTIVITY</scope>
</reference>
<reference key="3">
    <citation type="journal article" date="2011" name="Mol. Cell. Proteomics">
        <title>Proteogenomic analysis of Mycobacterium tuberculosis by high resolution mass spectrometry.</title>
        <authorList>
            <person name="Kelkar D.S."/>
            <person name="Kumar D."/>
            <person name="Kumar P."/>
            <person name="Balakrishnan L."/>
            <person name="Muthusamy B."/>
            <person name="Yadav A.K."/>
            <person name="Shrivastava P."/>
            <person name="Marimuthu A."/>
            <person name="Anand S."/>
            <person name="Sundaram H."/>
            <person name="Kingsbury R."/>
            <person name="Harsha H.C."/>
            <person name="Nair B."/>
            <person name="Prasad T.S."/>
            <person name="Chauhan D.S."/>
            <person name="Katoch K."/>
            <person name="Katoch V.M."/>
            <person name="Kumar P."/>
            <person name="Chaerkady R."/>
            <person name="Ramachandran S."/>
            <person name="Dash D."/>
            <person name="Pandey A."/>
        </authorList>
    </citation>
    <scope>IDENTIFICATION BY MASS SPECTROMETRY [LARGE SCALE ANALYSIS]</scope>
    <source>
        <strain>ATCC 25618 / H37Rv</strain>
    </source>
</reference>
<evidence type="ECO:0000256" key="1">
    <source>
        <dbReference type="SAM" id="MobiDB-lite"/>
    </source>
</evidence>
<evidence type="ECO:0000269" key="2">
    <source>
    </source>
</evidence>
<evidence type="ECO:0000303" key="3">
    <source>
    </source>
</evidence>
<evidence type="ECO:0000305" key="4"/>
<evidence type="ECO:0000312" key="5">
    <source>
        <dbReference type="EMBL" id="CCP43289.1"/>
    </source>
</evidence>
<sequence>MSTAGDDAVGVPPACGGRSDAVGVPQLARESGAMRDQDCSGELLRSPTHNGHLLVGALKRHQNKPVLFLGDTRLTGGQLADRISQYIQAFEALGAGTGVAVGLLSLNRPEVLMIIGAGQARGYRRTALHPLGSLADHAYVLNDAGISSLIIDPNPMFVERALALLEQVDSLQQILTIGPVPDALKHVAVDLSAEAAKYQPQPLVAADLPPDQVIGLTYTGGTTGKPKGVIGTAQSIATMTSIQLAEWEWPANPRFLMCTPLSHAGAAFFTPTVIKGGEMIVLAKFDPAEVLRIIEEQRITATMLVPSMLYALLDHPDSHTRDLSSLETVYYGASAINPVRLAEAIRRFGPIFAQYYGQSEAPMVITYLAKGDHDEKRLTSCGRPTLFARVALLDEHGKPVKQGEVGEICVSGPLLAGGYWNLPDETSRTFKDGWLHTGDLAREDSDGFYYIVDRVKDMIVTGGFNVFPREVEDVVAEHPAVAQVCVVGAPDEKWGEAVTAVVVLRSNAARDEPAIEAMTAEIQAAVKQRKGSVQAPKRVVVVDSLPLTGLGKPDKKAVRARFWEGAGRAVG</sequence>
<proteinExistence type="evidence at protein level"/>
<name>FAC8_MYCTU</name>
<keyword id="KW-0002">3D-structure</keyword>
<keyword id="KW-0067">ATP-binding</keyword>
<keyword id="KW-0276">Fatty acid metabolism</keyword>
<keyword id="KW-0436">Ligase</keyword>
<keyword id="KW-0443">Lipid metabolism</keyword>
<keyword id="KW-0547">Nucleotide-binding</keyword>
<keyword id="KW-1185">Reference proteome</keyword>
<comment type="function">
    <text evidence="2">Catalyzes the activation of medium/long-chain fatty acids as acyl-coenzyme A (acyl-CoA).</text>
</comment>
<comment type="catalytic activity">
    <reaction evidence="2">
        <text>a medium-chain fatty acid + ATP + CoA = a medium-chain fatty acyl-CoA + AMP + diphosphate</text>
        <dbReference type="Rhea" id="RHEA:48340"/>
        <dbReference type="ChEBI" id="CHEBI:30616"/>
        <dbReference type="ChEBI" id="CHEBI:33019"/>
        <dbReference type="ChEBI" id="CHEBI:57287"/>
        <dbReference type="ChEBI" id="CHEBI:59558"/>
        <dbReference type="ChEBI" id="CHEBI:90546"/>
        <dbReference type="ChEBI" id="CHEBI:456215"/>
        <dbReference type="EC" id="6.2.1.2"/>
    </reaction>
    <physiologicalReaction direction="left-to-right" evidence="2">
        <dbReference type="Rhea" id="RHEA:48341"/>
    </physiologicalReaction>
</comment>
<comment type="catalytic activity">
    <reaction evidence="2">
        <text>a long-chain fatty acid + ATP + CoA = a long-chain fatty acyl-CoA + AMP + diphosphate</text>
        <dbReference type="Rhea" id="RHEA:15421"/>
        <dbReference type="ChEBI" id="CHEBI:30616"/>
        <dbReference type="ChEBI" id="CHEBI:33019"/>
        <dbReference type="ChEBI" id="CHEBI:57287"/>
        <dbReference type="ChEBI" id="CHEBI:57560"/>
        <dbReference type="ChEBI" id="CHEBI:83139"/>
        <dbReference type="ChEBI" id="CHEBI:456215"/>
        <dbReference type="EC" id="6.2.1.3"/>
    </reaction>
    <physiologicalReaction direction="left-to-right" evidence="2">
        <dbReference type="Rhea" id="RHEA:15422"/>
    </physiologicalReaction>
</comment>
<comment type="catalytic activity">
    <reaction evidence="2">
        <text>hexanoate + ATP + CoA = hexanoyl-CoA + AMP + diphosphate</text>
        <dbReference type="Rhea" id="RHEA:43740"/>
        <dbReference type="ChEBI" id="CHEBI:17120"/>
        <dbReference type="ChEBI" id="CHEBI:30616"/>
        <dbReference type="ChEBI" id="CHEBI:33019"/>
        <dbReference type="ChEBI" id="CHEBI:57287"/>
        <dbReference type="ChEBI" id="CHEBI:62620"/>
        <dbReference type="ChEBI" id="CHEBI:456215"/>
    </reaction>
    <physiologicalReaction direction="left-to-right" evidence="2">
        <dbReference type="Rhea" id="RHEA:43741"/>
    </physiologicalReaction>
</comment>
<comment type="catalytic activity">
    <reaction evidence="2">
        <text>dodecanoate + ATP + CoA = dodecanoyl-CoA + AMP + diphosphate</text>
        <dbReference type="Rhea" id="RHEA:33623"/>
        <dbReference type="ChEBI" id="CHEBI:18262"/>
        <dbReference type="ChEBI" id="CHEBI:30616"/>
        <dbReference type="ChEBI" id="CHEBI:33019"/>
        <dbReference type="ChEBI" id="CHEBI:57287"/>
        <dbReference type="ChEBI" id="CHEBI:57375"/>
        <dbReference type="ChEBI" id="CHEBI:456215"/>
    </reaction>
    <physiologicalReaction direction="left-to-right" evidence="2">
        <dbReference type="Rhea" id="RHEA:33624"/>
    </physiologicalReaction>
</comment>
<comment type="catalytic activity">
    <reaction evidence="2">
        <text>hexadecanoate + ATP + CoA = hexadecanoyl-CoA + AMP + diphosphate</text>
        <dbReference type="Rhea" id="RHEA:30751"/>
        <dbReference type="ChEBI" id="CHEBI:7896"/>
        <dbReference type="ChEBI" id="CHEBI:30616"/>
        <dbReference type="ChEBI" id="CHEBI:33019"/>
        <dbReference type="ChEBI" id="CHEBI:57287"/>
        <dbReference type="ChEBI" id="CHEBI:57379"/>
        <dbReference type="ChEBI" id="CHEBI:456215"/>
    </reaction>
    <physiologicalReaction direction="left-to-right" evidence="2">
        <dbReference type="Rhea" id="RHEA:30752"/>
    </physiologicalReaction>
</comment>
<comment type="pathway">
    <text evidence="4">Lipid metabolism; fatty acid metabolism.</text>
</comment>
<comment type="similarity">
    <text evidence="4">Belongs to the ATP-dependent AMP-binding enzyme family.</text>
</comment>
<feature type="chain" id="PRO_0000451307" description="Medium/long-chain-fatty-acid--CoA ligase FadD8">
    <location>
        <begin position="1"/>
        <end position="571"/>
    </location>
</feature>
<feature type="region of interest" description="Disordered" evidence="1">
    <location>
        <begin position="1"/>
        <end position="22"/>
    </location>
</feature>
<protein>
    <recommendedName>
        <fullName evidence="4">Medium/long-chain-fatty-acid--CoA ligase FadD8</fullName>
        <ecNumber evidence="2">6.2.1.2</ecNumber>
        <ecNumber evidence="2">6.2.1.3</ecNumber>
    </recommendedName>
    <alternativeName>
        <fullName evidence="3">FACL8</fullName>
    </alternativeName>
</protein>
<gene>
    <name evidence="5" type="primary">fadD8</name>
    <name evidence="5" type="ordered locus">Rv0551c</name>
</gene>